<dbReference type="EMBL" id="CP000758">
    <property type="protein sequence ID" value="ABS14688.1"/>
    <property type="molecule type" value="Genomic_DNA"/>
</dbReference>
<dbReference type="RefSeq" id="WP_010659924.1">
    <property type="nucleotide sequence ID" value="NC_009667.1"/>
</dbReference>
<dbReference type="SMR" id="A6X0D4"/>
<dbReference type="STRING" id="439375.Oant_1972"/>
<dbReference type="GeneID" id="61317570"/>
<dbReference type="KEGG" id="oan:Oant_1972"/>
<dbReference type="eggNOG" id="COG0256">
    <property type="taxonomic scope" value="Bacteria"/>
</dbReference>
<dbReference type="HOGENOM" id="CLU_098841_0_1_5"/>
<dbReference type="PhylomeDB" id="A6X0D4"/>
<dbReference type="Proteomes" id="UP000002301">
    <property type="component" value="Chromosome 1"/>
</dbReference>
<dbReference type="GO" id="GO:0022625">
    <property type="term" value="C:cytosolic large ribosomal subunit"/>
    <property type="evidence" value="ECO:0007669"/>
    <property type="project" value="TreeGrafter"/>
</dbReference>
<dbReference type="GO" id="GO:0008097">
    <property type="term" value="F:5S rRNA binding"/>
    <property type="evidence" value="ECO:0007669"/>
    <property type="project" value="TreeGrafter"/>
</dbReference>
<dbReference type="GO" id="GO:0003735">
    <property type="term" value="F:structural constituent of ribosome"/>
    <property type="evidence" value="ECO:0007669"/>
    <property type="project" value="InterPro"/>
</dbReference>
<dbReference type="GO" id="GO:0006412">
    <property type="term" value="P:translation"/>
    <property type="evidence" value="ECO:0007669"/>
    <property type="project" value="UniProtKB-UniRule"/>
</dbReference>
<dbReference type="CDD" id="cd00432">
    <property type="entry name" value="Ribosomal_L18_L5e"/>
    <property type="match status" value="1"/>
</dbReference>
<dbReference type="FunFam" id="3.30.420.100:FF:000001">
    <property type="entry name" value="50S ribosomal protein L18"/>
    <property type="match status" value="1"/>
</dbReference>
<dbReference type="Gene3D" id="3.30.420.100">
    <property type="match status" value="1"/>
</dbReference>
<dbReference type="HAMAP" id="MF_01337_B">
    <property type="entry name" value="Ribosomal_uL18_B"/>
    <property type="match status" value="1"/>
</dbReference>
<dbReference type="InterPro" id="IPR004389">
    <property type="entry name" value="Ribosomal_uL18_bac-type"/>
</dbReference>
<dbReference type="InterPro" id="IPR005484">
    <property type="entry name" value="Ribosomal_uL18_bac/euk"/>
</dbReference>
<dbReference type="NCBIfam" id="TIGR00060">
    <property type="entry name" value="L18_bact"/>
    <property type="match status" value="1"/>
</dbReference>
<dbReference type="PANTHER" id="PTHR12899">
    <property type="entry name" value="39S RIBOSOMAL PROTEIN L18, MITOCHONDRIAL"/>
    <property type="match status" value="1"/>
</dbReference>
<dbReference type="PANTHER" id="PTHR12899:SF3">
    <property type="entry name" value="LARGE RIBOSOMAL SUBUNIT PROTEIN UL18M"/>
    <property type="match status" value="1"/>
</dbReference>
<dbReference type="Pfam" id="PF00861">
    <property type="entry name" value="Ribosomal_L18p"/>
    <property type="match status" value="1"/>
</dbReference>
<dbReference type="SUPFAM" id="SSF53137">
    <property type="entry name" value="Translational machinery components"/>
    <property type="match status" value="1"/>
</dbReference>
<comment type="function">
    <text evidence="1">This is one of the proteins that bind and probably mediate the attachment of the 5S RNA into the large ribosomal subunit, where it forms part of the central protuberance.</text>
</comment>
<comment type="subunit">
    <text evidence="1">Part of the 50S ribosomal subunit; part of the 5S rRNA/L5/L18/L25 subcomplex. Contacts the 5S and 23S rRNAs.</text>
</comment>
<comment type="similarity">
    <text evidence="1">Belongs to the universal ribosomal protein uL18 family.</text>
</comment>
<reference key="1">
    <citation type="journal article" date="2011" name="J. Bacteriol.">
        <title>Genome of Ochrobactrum anthropi ATCC 49188 T, a versatile opportunistic pathogen and symbiont of several eukaryotic hosts.</title>
        <authorList>
            <person name="Chain P.S."/>
            <person name="Lang D.M."/>
            <person name="Comerci D.J."/>
            <person name="Malfatti S.A."/>
            <person name="Vergez L.M."/>
            <person name="Shin M."/>
            <person name="Ugalde R.A."/>
            <person name="Garcia E."/>
            <person name="Tolmasky M.E."/>
        </authorList>
    </citation>
    <scope>NUCLEOTIDE SEQUENCE [LARGE SCALE GENOMIC DNA]</scope>
    <source>
        <strain>ATCC 49188 / DSM 6882 / CCUG 24695 / JCM 21032 / LMG 3331 / NBRC 15819 / NCTC 12168 / Alc 37</strain>
    </source>
</reference>
<keyword id="KW-1185">Reference proteome</keyword>
<keyword id="KW-0687">Ribonucleoprotein</keyword>
<keyword id="KW-0689">Ribosomal protein</keyword>
<keyword id="KW-0694">RNA-binding</keyword>
<keyword id="KW-0699">rRNA-binding</keyword>
<protein>
    <recommendedName>
        <fullName evidence="1">Large ribosomal subunit protein uL18</fullName>
    </recommendedName>
    <alternativeName>
        <fullName evidence="2">50S ribosomal protein L18</fullName>
    </alternativeName>
</protein>
<feature type="chain" id="PRO_1000053070" description="Large ribosomal subunit protein uL18">
    <location>
        <begin position="1"/>
        <end position="120"/>
    </location>
</feature>
<evidence type="ECO:0000255" key="1">
    <source>
        <dbReference type="HAMAP-Rule" id="MF_01337"/>
    </source>
</evidence>
<evidence type="ECO:0000305" key="2"/>
<gene>
    <name evidence="1" type="primary">rplR</name>
    <name type="ordered locus">Oant_1972</name>
</gene>
<organism>
    <name type="scientific">Brucella anthropi (strain ATCC 49188 / DSM 6882 / CCUG 24695 / JCM 21032 / LMG 3331 / NBRC 15819 / NCTC 12168 / Alc 37)</name>
    <name type="common">Ochrobactrum anthropi</name>
    <dbReference type="NCBI Taxonomy" id="439375"/>
    <lineage>
        <taxon>Bacteria</taxon>
        <taxon>Pseudomonadati</taxon>
        <taxon>Pseudomonadota</taxon>
        <taxon>Alphaproteobacteria</taxon>
        <taxon>Hyphomicrobiales</taxon>
        <taxon>Brucellaceae</taxon>
        <taxon>Brucella/Ochrobactrum group</taxon>
        <taxon>Brucella</taxon>
    </lineage>
</organism>
<accession>A6X0D4</accession>
<name>RL18_BRUA4</name>
<sequence length="120" mass="12656">MASPKETLQRRAARVRRQVKAVANGRPRLSVHRSSKNIYVQVIDDVRGVTIAAASTLDGDLKGKLKTGADSAAAAAVGKLVAERAVKAGVSEVVFDRGAFIYHGRVKALAEAAREGGLSF</sequence>
<proteinExistence type="inferred from homology"/>